<accession>Q8P312</accession>
<comment type="catalytic activity">
    <reaction evidence="1">
        <text>2-formamido-N(1)-(5-O-phospho-beta-D-ribosyl)acetamidine + ATP = 5-amino-1-(5-phospho-beta-D-ribosyl)imidazole + ADP + phosphate + H(+)</text>
        <dbReference type="Rhea" id="RHEA:23032"/>
        <dbReference type="ChEBI" id="CHEBI:15378"/>
        <dbReference type="ChEBI" id="CHEBI:30616"/>
        <dbReference type="ChEBI" id="CHEBI:43474"/>
        <dbReference type="ChEBI" id="CHEBI:137981"/>
        <dbReference type="ChEBI" id="CHEBI:147287"/>
        <dbReference type="ChEBI" id="CHEBI:456216"/>
        <dbReference type="EC" id="6.3.3.1"/>
    </reaction>
</comment>
<comment type="pathway">
    <text evidence="1">Purine metabolism; IMP biosynthesis via de novo pathway; 5-amino-1-(5-phospho-D-ribosyl)imidazole from N(2)-formyl-N(1)-(5-phospho-D-ribosyl)glycinamide: step 2/2.</text>
</comment>
<comment type="subcellular location">
    <subcellularLocation>
        <location evidence="1">Cytoplasm</location>
    </subcellularLocation>
</comment>
<comment type="similarity">
    <text evidence="1">Belongs to the AIR synthase family.</text>
</comment>
<reference key="1">
    <citation type="journal article" date="2002" name="Proc. Natl. Acad. Sci. U.S.A.">
        <title>Genome sequence and comparative microarray analysis of serotype M18 group A Streptococcus strains associated with acute rheumatic fever outbreaks.</title>
        <authorList>
            <person name="Smoot J.C."/>
            <person name="Barbian K.D."/>
            <person name="Van Gompel J.J."/>
            <person name="Smoot L.M."/>
            <person name="Chaussee M.S."/>
            <person name="Sylva G.L."/>
            <person name="Sturdevant D.E."/>
            <person name="Ricklefs S.M."/>
            <person name="Porcella S.F."/>
            <person name="Parkins L.D."/>
            <person name="Beres S.B."/>
            <person name="Campbell D.S."/>
            <person name="Smith T.M."/>
            <person name="Zhang Q."/>
            <person name="Kapur V."/>
            <person name="Daly J.A."/>
            <person name="Veasy L.G."/>
            <person name="Musser J.M."/>
        </authorList>
    </citation>
    <scope>NUCLEOTIDE SEQUENCE [LARGE SCALE GENOMIC DNA]</scope>
    <source>
        <strain>MGAS8232</strain>
    </source>
</reference>
<keyword id="KW-0067">ATP-binding</keyword>
<keyword id="KW-0963">Cytoplasm</keyword>
<keyword id="KW-0436">Ligase</keyword>
<keyword id="KW-0547">Nucleotide-binding</keyword>
<keyword id="KW-0658">Purine biosynthesis</keyword>
<feature type="chain" id="PRO_0000148264" description="Phosphoribosylformylglycinamidine cyclo-ligase">
    <location>
        <begin position="1"/>
        <end position="340"/>
    </location>
</feature>
<organism>
    <name type="scientific">Streptococcus pyogenes serotype M18 (strain MGAS8232)</name>
    <dbReference type="NCBI Taxonomy" id="186103"/>
    <lineage>
        <taxon>Bacteria</taxon>
        <taxon>Bacillati</taxon>
        <taxon>Bacillota</taxon>
        <taxon>Bacilli</taxon>
        <taxon>Lactobacillales</taxon>
        <taxon>Streptococcaceae</taxon>
        <taxon>Streptococcus</taxon>
    </lineage>
</organism>
<evidence type="ECO:0000255" key="1">
    <source>
        <dbReference type="HAMAP-Rule" id="MF_00741"/>
    </source>
</evidence>
<sequence>MSEKNAYAKSGVDVEAGYEVVERIKKHVARTERAGVMGVLGGFGGMFDLSKTGVKEPVLVSGTDGVGTKLMLAIKYDKHDTIGQDCVAMCVNDIIAAGAEPLYFLDYVATGKNNPVKLEEVVSGVAEGCVQAGAALIGGETAEMPGMYGEDDYDLAGFAVGVAEKSQIIDGSKVKEGDILLGLASSGIHSNGYSLVRRVFADYTGKELLPELEGKQLKDVLLEPTRIYVKAALPLIKEELVNGIGHITGGGFIENIPRMFADDLAAEIDEDKVPVLPIFKALEKYGDIKHEEMFEIFNMGVGLMLAVSPENVNRVKELLDEPVYEIGRIIKKADDSVVIK</sequence>
<name>PUR5_STRP8</name>
<dbReference type="EC" id="6.3.3.1" evidence="1"/>
<dbReference type="EMBL" id="AE009949">
    <property type="protein sequence ID" value="AAL96857.1"/>
    <property type="molecule type" value="Genomic_DNA"/>
</dbReference>
<dbReference type="RefSeq" id="WP_011017231.1">
    <property type="nucleotide sequence ID" value="NC_003485.1"/>
</dbReference>
<dbReference type="SMR" id="Q8P312"/>
<dbReference type="KEGG" id="spm:spyM18_0028"/>
<dbReference type="HOGENOM" id="CLU_047116_0_0_9"/>
<dbReference type="UniPathway" id="UPA00074">
    <property type="reaction ID" value="UER00129"/>
</dbReference>
<dbReference type="GO" id="GO:0005829">
    <property type="term" value="C:cytosol"/>
    <property type="evidence" value="ECO:0007669"/>
    <property type="project" value="TreeGrafter"/>
</dbReference>
<dbReference type="GO" id="GO:0005524">
    <property type="term" value="F:ATP binding"/>
    <property type="evidence" value="ECO:0007669"/>
    <property type="project" value="UniProtKB-KW"/>
</dbReference>
<dbReference type="GO" id="GO:0004637">
    <property type="term" value="F:phosphoribosylamine-glycine ligase activity"/>
    <property type="evidence" value="ECO:0007669"/>
    <property type="project" value="TreeGrafter"/>
</dbReference>
<dbReference type="GO" id="GO:0004641">
    <property type="term" value="F:phosphoribosylformylglycinamidine cyclo-ligase activity"/>
    <property type="evidence" value="ECO:0007669"/>
    <property type="project" value="UniProtKB-UniRule"/>
</dbReference>
<dbReference type="GO" id="GO:0006189">
    <property type="term" value="P:'de novo' IMP biosynthetic process"/>
    <property type="evidence" value="ECO:0007669"/>
    <property type="project" value="UniProtKB-UniRule"/>
</dbReference>
<dbReference type="GO" id="GO:0046084">
    <property type="term" value="P:adenine biosynthetic process"/>
    <property type="evidence" value="ECO:0007669"/>
    <property type="project" value="TreeGrafter"/>
</dbReference>
<dbReference type="CDD" id="cd02196">
    <property type="entry name" value="PurM"/>
    <property type="match status" value="1"/>
</dbReference>
<dbReference type="FunFam" id="3.30.1330.10:FF:000001">
    <property type="entry name" value="Phosphoribosylformylglycinamidine cyclo-ligase"/>
    <property type="match status" value="1"/>
</dbReference>
<dbReference type="FunFam" id="3.90.650.10:FF:000011">
    <property type="entry name" value="Phosphoribosylformylglycinamidine cyclo-ligase"/>
    <property type="match status" value="1"/>
</dbReference>
<dbReference type="Gene3D" id="3.90.650.10">
    <property type="entry name" value="PurM-like C-terminal domain"/>
    <property type="match status" value="1"/>
</dbReference>
<dbReference type="Gene3D" id="3.30.1330.10">
    <property type="entry name" value="PurM-like, N-terminal domain"/>
    <property type="match status" value="1"/>
</dbReference>
<dbReference type="HAMAP" id="MF_00741">
    <property type="entry name" value="AIRS"/>
    <property type="match status" value="1"/>
</dbReference>
<dbReference type="InterPro" id="IPR010918">
    <property type="entry name" value="PurM-like_C_dom"/>
</dbReference>
<dbReference type="InterPro" id="IPR036676">
    <property type="entry name" value="PurM-like_C_sf"/>
</dbReference>
<dbReference type="InterPro" id="IPR016188">
    <property type="entry name" value="PurM-like_N"/>
</dbReference>
<dbReference type="InterPro" id="IPR036921">
    <property type="entry name" value="PurM-like_N_sf"/>
</dbReference>
<dbReference type="InterPro" id="IPR004733">
    <property type="entry name" value="PurM_cligase"/>
</dbReference>
<dbReference type="NCBIfam" id="TIGR00878">
    <property type="entry name" value="purM"/>
    <property type="match status" value="1"/>
</dbReference>
<dbReference type="PANTHER" id="PTHR10520:SF12">
    <property type="entry name" value="TRIFUNCTIONAL PURINE BIOSYNTHETIC PROTEIN ADENOSINE-3"/>
    <property type="match status" value="1"/>
</dbReference>
<dbReference type="PANTHER" id="PTHR10520">
    <property type="entry name" value="TRIFUNCTIONAL PURINE BIOSYNTHETIC PROTEIN ADENOSINE-3-RELATED"/>
    <property type="match status" value="1"/>
</dbReference>
<dbReference type="Pfam" id="PF00586">
    <property type="entry name" value="AIRS"/>
    <property type="match status" value="1"/>
</dbReference>
<dbReference type="Pfam" id="PF02769">
    <property type="entry name" value="AIRS_C"/>
    <property type="match status" value="1"/>
</dbReference>
<dbReference type="SUPFAM" id="SSF56042">
    <property type="entry name" value="PurM C-terminal domain-like"/>
    <property type="match status" value="1"/>
</dbReference>
<dbReference type="SUPFAM" id="SSF55326">
    <property type="entry name" value="PurM N-terminal domain-like"/>
    <property type="match status" value="1"/>
</dbReference>
<gene>
    <name evidence="1" type="primary">purM</name>
    <name type="ordered locus">spyM18_0028</name>
</gene>
<proteinExistence type="inferred from homology"/>
<protein>
    <recommendedName>
        <fullName evidence="1">Phosphoribosylformylglycinamidine cyclo-ligase</fullName>
        <ecNumber evidence="1">6.3.3.1</ecNumber>
    </recommendedName>
    <alternativeName>
        <fullName evidence="1">AIR synthase</fullName>
    </alternativeName>
    <alternativeName>
        <fullName evidence="1">AIRS</fullName>
    </alternativeName>
    <alternativeName>
        <fullName evidence="1">Phosphoribosyl-aminoimidazole synthetase</fullName>
    </alternativeName>
</protein>